<feature type="chain" id="PRO_0000217871" description="Circadian clock oscillator protein KaiA">
    <location>
        <begin position="1"/>
        <end position="284"/>
    </location>
</feature>
<feature type="domain" description="KaiA N-terminal" evidence="1 10">
    <location>
        <begin position="1"/>
        <end position="164"/>
    </location>
</feature>
<feature type="domain" description="KaiA C-terminal" evidence="2 10">
    <location>
        <begin position="174"/>
        <end position="282"/>
    </location>
</feature>
<feature type="region of interest" description="PsR domain, binds oxidized quinones" evidence="17">
    <location>
        <begin position="1"/>
        <end position="135"/>
    </location>
</feature>
<feature type="region of interest" description="Flexible linker" evidence="10">
    <location>
        <begin position="165"/>
        <end position="173"/>
    </location>
</feature>
<feature type="mutagenesis site" description="Extends the period of the circadian rhythm to 29 hours." evidence="6">
    <original>I</original>
    <variation>T</variation>
    <location>
        <position position="9"/>
    </location>
</feature>
<feature type="mutagenesis site" description="Extends the period of the circadian rhythm to 27 hours." evidence="6">
    <original>I</original>
    <variation>F</variation>
    <location>
        <position position="16"/>
    </location>
</feature>
<feature type="mutagenesis site" description="Extends the period of the circadian rhythm to 27 hours." evidence="6">
    <original>L</original>
    <variation>P</variation>
    <location>
        <position position="31"/>
    </location>
</feature>
<feature type="mutagenesis site" description="Extends the period of the circadian rhythm to 29 hours." evidence="6">
    <original>S</original>
    <variation>P</variation>
    <location>
        <position position="36"/>
    </location>
</feature>
<feature type="mutagenesis site" description="Induces an arrhythmic phenotype." evidence="6">
    <original>C</original>
    <variation>S</variation>
    <location>
        <position position="53"/>
    </location>
</feature>
<feature type="mutagenesis site" description="Extends the period of the circadian rhythm to 28 hours." evidence="6">
    <original>V</original>
    <variation>G</variation>
    <location>
        <position position="76"/>
    </location>
</feature>
<feature type="mutagenesis site" description="In kaiA1; extends the period of the circadian rhythm to 33 hours and increases the interaction with KaiB." evidence="3 24">
    <original>E</original>
    <variation>K</variation>
    <location>
        <position position="103"/>
    </location>
</feature>
<feature type="mutagenesis site" description="Extends the period of the circadian rhythm to 33 hours." evidence="6">
    <original>Q</original>
    <variation>R</variation>
    <location>
        <position position="113"/>
    </location>
</feature>
<feature type="mutagenesis site" description="Extends the period of the circadian rhythm to 26 hours." evidence="6">
    <original>Q</original>
    <variation>L</variation>
    <location>
        <position position="117"/>
    </location>
</feature>
<feature type="mutagenesis site" description="Extends the period of the circadian rhythm to 30 hours." evidence="6">
    <original>D</original>
    <variation>E</variation>
    <location>
        <position position="119"/>
    </location>
</feature>
<feature type="mutagenesis site" description="Extends the period of the circadian rhythm to 26 hours." evidence="6">
    <original>D</original>
    <variation>G</variation>
    <location>
        <position position="119"/>
    </location>
</feature>
<feature type="mutagenesis site" description="Extends the period of the circadian rhythm to 28 hours." evidence="6">
    <original>V</original>
    <variation>A</variation>
    <location>
        <position position="131"/>
    </location>
</feature>
<feature type="mutagenesis site" description="Extends the period of the circadian rhythm to 30 hours." evidence="6">
    <original>D</original>
    <variation>V</variation>
    <location>
        <position position="136"/>
    </location>
</feature>
<feature type="mutagenesis site" description="Extends the period of the circadian rhythm to 29 hours." evidence="6">
    <original>D</original>
    <variation>Y</variation>
    <location>
        <position position="136"/>
    </location>
</feature>
<feature type="mutagenesis site" description="Disrupts circadian rhythms in vivo." evidence="21">
    <original>L</original>
    <variation>A</variation>
    <location>
        <position position="156"/>
    </location>
</feature>
<feature type="mutagenesis site" description="In kaiA4; induces an arrhythmic phenotype and reduces the interaction with KaiC." evidence="5">
    <original>Y</original>
    <variation>C</variation>
    <location>
        <position position="166"/>
    </location>
</feature>
<feature type="mutagenesis site" description="Induces an arrhythmic phenotype." evidence="6">
    <original>F</original>
    <variation>S</variation>
    <variation>I</variation>
    <location>
        <position position="178"/>
    </location>
</feature>
<feature type="mutagenesis site" description="Extends the period of the circadian rhythm to 26 hours." evidence="6">
    <original>R</original>
    <variation>H</variation>
    <location>
        <position position="180"/>
    </location>
</feature>
<feature type="mutagenesis site" description="Extends the period of the circadian rhythm to 26 hours." evidence="6">
    <original>M</original>
    <variation>T</variation>
    <location>
        <position position="194"/>
    </location>
</feature>
<feature type="mutagenesis site" description="Induces an arrhythmic phenotype." evidence="6">
    <original>F</original>
    <variation>S</variation>
    <location>
        <position position="224"/>
    </location>
</feature>
<feature type="mutagenesis site" description="Induces an arrhythmic phenotype." evidence="6">
    <original>F</original>
    <variation>S</variation>
    <location>
        <position position="225"/>
    </location>
</feature>
<feature type="mutagenesis site" description="Extends the period of the circadian rhythm to 28 hours." evidence="6">
    <original>E</original>
    <variation>G</variation>
    <location>
        <position position="239"/>
    </location>
</feature>
<feature type="mutagenesis site" description="Extends the period of the circadian rhythm to 38 hours." evidence="6">
    <original>M</original>
    <variation>T</variation>
    <location>
        <position position="241"/>
    </location>
</feature>
<feature type="mutagenesis site" description="Extends the period of the circadian rhythm to 27 hours." evidence="6">
    <original>D</original>
    <variation>V</variation>
    <variation>G</variation>
    <location>
        <position position="242"/>
    </location>
</feature>
<feature type="mutagenesis site" description="Extends the period of the circadian rhythm to 34 hours." evidence="6">
    <original>E</original>
    <variation>A</variation>
    <location>
        <position position="243"/>
    </location>
</feature>
<feature type="mutagenesis site" description="Extends the period of the circadian rhythm to 26 hours." evidence="6">
    <original>F</original>
    <variation>V</variation>
    <location>
        <position position="244"/>
    </location>
</feature>
<feature type="mutagenesis site" description="Extends the period of the circadian rhythm to 26 hours." evidence="6">
    <original>A</original>
    <variation>D</variation>
    <location>
        <position position="245"/>
    </location>
</feature>
<feature type="mutagenesis site" description="In kaiA2; extends the period of the circadian rhythm to 30 hours." evidence="5 24">
    <original>R</original>
    <variation>H</variation>
    <location>
        <position position="249"/>
    </location>
</feature>
<feature type="mutagenesis site" description="Extends the period of the circadian rhythm to 27 hours." evidence="6">
    <original>I</original>
    <variation>V</variation>
    <location>
        <position position="266"/>
    </location>
</feature>
<feature type="mutagenesis site" description="Extends the period of the circadian rhythm to 30 hours." evidence="6">
    <original>C</original>
    <variation>Y</variation>
    <location>
        <position position="273"/>
    </location>
</feature>
<feature type="mutagenesis site" description="In kaiA3; induces an arrhythmic phenotype." evidence="24">
    <original>E</original>
    <variation>K</variation>
    <location>
        <position position="274"/>
    </location>
</feature>
<feature type="strand" evidence="37">
    <location>
        <begin position="5"/>
        <end position="10"/>
    </location>
</feature>
<feature type="helix" evidence="37">
    <location>
        <begin position="14"/>
        <end position="23"/>
    </location>
</feature>
<feature type="strand" evidence="37">
    <location>
        <begin position="29"/>
        <end position="34"/>
    </location>
</feature>
<feature type="helix" evidence="37">
    <location>
        <begin position="37"/>
        <end position="46"/>
    </location>
</feature>
<feature type="turn" evidence="38">
    <location>
        <begin position="47"/>
        <end position="49"/>
    </location>
</feature>
<feature type="strand" evidence="37">
    <location>
        <begin position="52"/>
        <end position="57"/>
    </location>
</feature>
<feature type="helix" evidence="37">
    <location>
        <begin position="63"/>
        <end position="72"/>
    </location>
</feature>
<feature type="strand" evidence="37">
    <location>
        <begin position="79"/>
        <end position="83"/>
    </location>
</feature>
<feature type="strand" evidence="38">
    <location>
        <begin position="87"/>
        <end position="89"/>
    </location>
</feature>
<feature type="strand" evidence="37">
    <location>
        <begin position="98"/>
        <end position="100"/>
    </location>
</feature>
<feature type="strand" evidence="37">
    <location>
        <begin position="104"/>
        <end position="106"/>
    </location>
</feature>
<feature type="helix" evidence="36">
    <location>
        <begin position="108"/>
        <end position="110"/>
    </location>
</feature>
<feature type="helix" evidence="37">
    <location>
        <begin position="111"/>
        <end position="113"/>
    </location>
</feature>
<feature type="helix" evidence="37">
    <location>
        <begin position="114"/>
        <end position="128"/>
    </location>
</feature>
<feature type="turn" evidence="37">
    <location>
        <begin position="134"/>
        <end position="136"/>
    </location>
</feature>
<feature type="strand" evidence="38">
    <location>
        <begin position="138"/>
        <end position="140"/>
    </location>
</feature>
<feature type="turn" evidence="38">
    <location>
        <begin position="144"/>
        <end position="147"/>
    </location>
</feature>
<feature type="helix" evidence="37">
    <location>
        <begin position="149"/>
        <end position="151"/>
    </location>
</feature>
<feature type="helix" evidence="37">
    <location>
        <begin position="152"/>
        <end position="164"/>
    </location>
</feature>
<feature type="strand" evidence="37">
    <location>
        <begin position="165"/>
        <end position="171"/>
    </location>
</feature>
<feature type="helix" evidence="37">
    <location>
        <begin position="175"/>
        <end position="177"/>
    </location>
</feature>
<feature type="turn" evidence="37">
    <location>
        <begin position="179"/>
        <end position="181"/>
    </location>
</feature>
<feature type="helix" evidence="37">
    <location>
        <begin position="184"/>
        <end position="205"/>
    </location>
</feature>
<feature type="strand" evidence="39">
    <location>
        <begin position="208"/>
        <end position="211"/>
    </location>
</feature>
<feature type="helix" evidence="37">
    <location>
        <begin position="212"/>
        <end position="225"/>
    </location>
</feature>
<feature type="helix" evidence="37">
    <location>
        <begin position="230"/>
        <end position="249"/>
    </location>
</feature>
<feature type="turn" evidence="38">
    <location>
        <begin position="250"/>
        <end position="252"/>
    </location>
</feature>
<feature type="helix" evidence="37">
    <location>
        <begin position="257"/>
        <end position="261"/>
    </location>
</feature>
<feature type="helix" evidence="37">
    <location>
        <begin position="262"/>
        <end position="279"/>
    </location>
</feature>
<accession>Q79PF6</accession>
<accession>Q31NX1</accession>
<accession>Q9Z3H4</accession>
<comment type="function">
    <text evidence="7 11 15 16 22 24">Key component of the KaiABC oscillator complex, which constitutes the main circadian regulator in cyanobacteria (PubMed:17717528, PubMed:28302852, PubMed:9727980). Complex composition changes during the circadian cycle to control KaiC phosphorylation (PubMed:28302852). KaiA stimulates KaiC autophosphorylation, while KaiB sequesters KaiA, leading to KaiC autodephosphorylation (PubMed:17717528, PubMed:17916691, PubMed:28302852). KaiA binding to the KaiC CII domain during the subjective day yields KaiA(2-4):KaiC(6) complexes which stimulate KaiC autophosphorylation (PubMed:28302852). A KaiA dimer is sufficient to enhance KaiC hexamer phosphorylation (PubMed:12391300, PubMed:15347812). Phospho-Ser-431 KaiC accumulation triggers binding of KaiB during the subjective night to form the KaiB(6):KaiC(6) complex, leading to changes in the output regulators CikA and SasA. KaiB(6):KaiC(6) formation exposes a site for KaiA binding on KaiB that sequesters KaiA from KaiC's CII domain, making the KaiC(6):KaiB(6):KaiA(12) complex resulting in KaiC autodephosphorylation. Complete dephosphorylation of KaiC leads to dissociation of KaiA(2):KaiB(1), completing 1 cycle of the Kai oscillator (PubMed:28302852).</text>
</comment>
<comment type="function">
    <text evidence="7 8 9 13 23 24">Circadian oscillations can be generated in vitro by incubating KaiA, KaiB and KaiC with 1 mM ATP. The cycle is self-sustainable for at least 3 cycles and resistant to temperature changes (PubMed:15831759). A very robust clock is reconstituted with KaiA, KaiB, KaiC, SasA, CikA and RpaA; output is measured by transcription from an appropriate reporter (PubMed:34618577).</text>
</comment>
<comment type="function">
    <text evidence="17 18">KaiA binds oxidized quinones via its N-terminal PsR domain and is able to sense redox signals directly; quinone analog DBMIB (2,5-dibromo-3-methyl-6-isopropyl-p-benzoquinone) blocks KaiA stimulation of KaiC phosphorylation (PubMed:20231482). The homodimer binds up to 8 quinones in the crystal structure, 3 in the PsR domain and 1 via the C-terminal helical bundle. Binding of oxidized quinone to the KaiA C-terminal domain reduces the phosphorylation of KaiC slightly; quinones may interact in a complex manner with KaiA to mediate clock input (PubMed:23020633).</text>
</comment>
<comment type="activity regulation">
    <text evidence="17">Binding of oxidized quinones (produced as darkness falls) prevents KaiA from stimulating KaiC autophosphorylation.</text>
</comment>
<comment type="subunit">
    <text evidence="3 5 10 11 12 14 18 19 20 21 22 23">Homodimer (PubMed:15007067, PubMed:23020633, PubMed:26200123). The KaiABC complex composition changes during the circadian cycle to control KaiC phosphorylation. Complexes KaiC(6), KaiA(2-4):KaiC(6), KaiB(6):KaiC(6) and KaiC(6):KaiB(6):KaiA(12) are among the most important forms, many form cooperatively (PubMed:28302852, PubMed:34618577). The KaiA:KaiB complex is only found at 20-24 hours in the circadian cycle (subjective night) (PubMed:15347812). Binds to the C-terminal A-loop of KaiC via a coiled-coil structure (PubMed:26200123). KaiA and CikA compete for binding to KaiB(fs) (PubMed:26113641, PubMed:28302851). CikA copurifies with this protein in the clock complex (PubMed:17088557). Interacts with LdpA (PubMed:15775978).</text>
</comment>
<comment type="interaction">
    <interactant intactId="EBI-592281">
        <id>Q79PF6</id>
    </interactant>
    <interactant intactId="EBI-592281">
        <id>Q79PF6</id>
        <label>kaiA</label>
    </interactant>
    <organismsDiffer>false</organismsDiffer>
    <experiments>5</experiments>
</comment>
<comment type="interaction">
    <interactant intactId="EBI-592281">
        <id>Q79PF6</id>
    </interactant>
    <interactant intactId="EBI-619150">
        <id>Q79PF5</id>
        <label>kaiB</label>
    </interactant>
    <organismsDiffer>false</organismsDiffer>
    <experiments>11</experiments>
</comment>
<comment type="interaction">
    <interactant intactId="EBI-592281">
        <id>Q79PF6</id>
    </interactant>
    <interactant intactId="EBI-592287">
        <id>Q79PF4</id>
        <label>kaiC</label>
    </interactant>
    <organismsDiffer>false</organismsDiffer>
    <experiments>22</experiments>
</comment>
<comment type="interaction">
    <interactant intactId="EBI-592281">
        <id>Q79PF6</id>
    </interactant>
    <interactant intactId="EBI-626836">
        <id>Q8GLI4</id>
        <label>ldpA</label>
    </interactant>
    <organismsDiffer>false</organismsDiffer>
    <experiments>2</experiments>
</comment>
<comment type="developmental stage">
    <text evidence="9">Expressed constantly throughout the circadian cycle.</text>
</comment>
<comment type="induction">
    <text evidence="4 17 24">Transcribed in a circadian rhythm with maximal expression at 12 hours and minimal expression 12 hours later; has its own promoter (PubMed:9727980). Protein levels are fairly constant (at protein level) (PubMed:10786837). Rapidly forms aggregates in the presence of oxidized (but not reduced) quinone analog DBMIB (2,5-dibromo-3-methyl-6-isopropyl-p-benzoquinone), an artifical electron acceptor for photosystem II that reduces the plastoquinone pool (at protein level). Aggregation is irreversible, and prevents KaiA from stimulating phosphorylation of KaiC (PubMed:20231482).</text>
</comment>
<comment type="domain">
    <text evidence="10 18">The homodimer has swapped domains; the N-terminus of one monomer interacts with the C-terminus of the other.</text>
</comment>
<comment type="domain">
    <text evidence="10 17 18">The N-terminal region (the pseudo-receiver, PsR), does not enhance KaiC autophosphorylation. It may have an amplitude-amplifier function and may be involved in transducing input signals to the KaiABC complex. This domain is not conserved in all other species (PubMed:15007067). PsR binds oxidized but not reduced quinones (PubMed:20231482, PubMed:23020633). The flexible linker and C-terminal domain mediate the interaction with KaiC, homodimerization, and are responsible for the clock oscillation function (PubMed:15007067). The C-terminal domain also binds an oxidized quinone in a crystal (PubMed:23020633).</text>
</comment>
<comment type="disruption phenotype">
    <text evidence="24">Not essential for growth on low light, loss of circadian cycle and rhythmicity.</text>
</comment>
<comment type="miscellaneous">
    <text evidence="25">'Kai' means 'cycle' in Japanese.</text>
</comment>
<comment type="similarity">
    <text evidence="26">Belongs to the KaiA family.</text>
</comment>
<proteinExistence type="evidence at protein level"/>
<reference evidence="29" key="1">
    <citation type="journal article" date="1998" name="Science">
        <title>Expression of a gene cluster kaiABC as a circadian feedback process in cyanobacteria.</title>
        <authorList>
            <person name="Ishiura M."/>
            <person name="Kutsuna S."/>
            <person name="Aoki S."/>
            <person name="Iwasaki H."/>
            <person name="Andersson C.R."/>
            <person name="Tanabe A."/>
            <person name="Golden S.S."/>
            <person name="Johnson C.H."/>
            <person name="Kondo T."/>
        </authorList>
    </citation>
    <scope>NUCLEOTIDE SEQUENCE [GENOMIC DNA]</scope>
    <scope>FUNCTION</scope>
    <scope>INDUCTION</scope>
    <scope>DISRUPTION PHENOTYPE</scope>
    <scope>MUTAGENESIS OF GLU-103; ARG-249 AND GLU-274</scope>
    <source>
        <strain>ATCC 33912 / PCC 7942 / FACHB-805</strain>
    </source>
</reference>
<reference evidence="27" key="2">
    <citation type="submission" date="2002-06" db="EMBL/GenBank/DDBJ databases">
        <title>Synechococcus elongatus PCC7942 cosmid 7G3.</title>
        <authorList>
            <person name="Holtman C.K."/>
            <person name="Sandoval P."/>
            <person name="Chen Y."/>
            <person name="Socias T."/>
            <person name="Mohler B.J."/>
            <person name="McMurtry S."/>
            <person name="Gonzalez A."/>
            <person name="Salinas I."/>
            <person name="Golden S.S."/>
            <person name="Youderian P."/>
        </authorList>
    </citation>
    <scope>NUCLEOTIDE SEQUENCE [GENOMIC DNA]</scope>
    <source>
        <strain>ATCC 33912 / PCC 7942 / FACHB-805</strain>
    </source>
</reference>
<reference evidence="28" key="3">
    <citation type="submission" date="2005-08" db="EMBL/GenBank/DDBJ databases">
        <title>Complete sequence of chromosome 1 of Synechococcus elongatus PCC 7942.</title>
        <authorList>
            <consortium name="US DOE Joint Genome Institute"/>
            <person name="Copeland A."/>
            <person name="Lucas S."/>
            <person name="Lapidus A."/>
            <person name="Barry K."/>
            <person name="Detter J.C."/>
            <person name="Glavina T."/>
            <person name="Hammon N."/>
            <person name="Israni S."/>
            <person name="Pitluck S."/>
            <person name="Schmutz J."/>
            <person name="Larimer F."/>
            <person name="Land M."/>
            <person name="Kyrpides N."/>
            <person name="Lykidis A."/>
            <person name="Golden S."/>
            <person name="Richardson P."/>
        </authorList>
    </citation>
    <scope>NUCLEOTIDE SEQUENCE [LARGE SCALE GENOMIC DNA]</scope>
    <source>
        <strain>ATCC 33912 / PCC 7942 / FACHB-805</strain>
    </source>
</reference>
<reference key="4">
    <citation type="journal article" date="1999" name="EMBO J.">
        <title>Physical interactions among circadian clock proteins KaiA, KaiB and KaiC in cyanobacteria.</title>
        <authorList>
            <person name="Iwasaki H."/>
            <person name="Taniguchi Y."/>
            <person name="Ishiura M."/>
            <person name="Kondo T."/>
        </authorList>
    </citation>
    <scope>INTERACTION WITH KAIC AND KAIB</scope>
    <scope>MUTAGENESIS OF GLU-103</scope>
    <source>
        <strain>ATCC 33912 / PCC 7942 / FACHB-805</strain>
    </source>
</reference>
<reference key="5">
    <citation type="journal article" date="2000" name="Cell">
        <title>A kaiC-interacting sensory histidine kinase, SasA, necessary to sustain robust circadian oscillation in cyanobacteria.</title>
        <authorList>
            <person name="Iwasaki H."/>
            <person name="Williams S.B."/>
            <person name="Kitayama Y."/>
            <person name="Ishiura M."/>
            <person name="Golden S.S."/>
            <person name="Kondo T."/>
        </authorList>
    </citation>
    <scope>INDUCTION</scope>
    <source>
        <strain>ATCC 33912 / PCC 7942 / FACHB-805</strain>
    </source>
</reference>
<reference key="6">
    <citation type="journal article" date="2001" name="FEBS Lett.">
        <title>Two KaiA-binding domains of cyanobacterial circadian clock protein KaiC.</title>
        <authorList>
            <person name="Taniguchi Y."/>
            <person name="Yamaguchi A."/>
            <person name="Hijikata A."/>
            <person name="Iwasaki H."/>
            <person name="Kamagata K."/>
            <person name="Ishiura M."/>
            <person name="Go M."/>
            <person name="Kondo T."/>
        </authorList>
    </citation>
    <scope>INTERACTION WITH KAIC</scope>
    <scope>MUTAGENESIS OF TYR-166 AND ARG-249</scope>
    <source>
        <strain>ATCC 33912 / PCC 7942 / FACHB-805</strain>
    </source>
</reference>
<reference key="7">
    <citation type="journal article" date="2002" name="Microbiology">
        <title>Mutations in KaiA, a clock protein, extend the period of circadian rhythm in the cyanobacterium Synechococcus elongatus PCC 7942.</title>
        <authorList>
            <person name="Nishimura H."/>
            <person name="Nakahira Y."/>
            <person name="Imai K."/>
            <person name="Tsuruhara A."/>
            <person name="Kondo H."/>
            <person name="Hayashi H."/>
            <person name="Hirai M."/>
            <person name="Saito H."/>
            <person name="Kondo T."/>
        </authorList>
    </citation>
    <scope>MUTAGENESIS OF ILE-9; ILE-16; LEU-31; SER-36; CYS-53; VAL-76; GLN-113; GLN-117; ASP-119; VAL-131; ASP-136; PHE-178; ARG-180; MET-194; PHE-224; PHE-225; GLU-239; MET-241; ASP-242; GLU-243; PHE-244; ALA-245; ILE-266 AND CYS-273</scope>
    <source>
        <strain>ATCC 33912 / PCC 7942 / FACHB-805</strain>
    </source>
</reference>
<reference key="8">
    <citation type="journal article" date="2002" name="Proc. Natl. Acad. Sci. U.S.A.">
        <title>KaiA-stimulated KaiC phosphorylation in circadian timing loops in cyanobacteria.</title>
        <authorList>
            <person name="Iwasaki H."/>
            <person name="Nishiwaki T."/>
            <person name="Kitayama Y."/>
            <person name="Nakajima M."/>
            <person name="Kondo T."/>
        </authorList>
    </citation>
    <scope>FUNCTION</scope>
    <source>
        <strain>ATCC 33912 / PCC 7942 / FACHB-805</strain>
    </source>
</reference>
<reference key="9">
    <citation type="journal article" date="2003" name="EMBO J.">
        <title>Cyanobacterial circadian clockwork: roles of KaiA, KaiB and the kaiBC promoter in regulating KaiC.</title>
        <authorList>
            <person name="Xu Y."/>
            <person name="Mori T."/>
            <person name="Johnson C.H."/>
        </authorList>
    </citation>
    <scope>FUNCTION</scope>
</reference>
<reference key="10">
    <citation type="journal article" date="2003" name="EMBO J.">
        <title>KaiB functions as an attenuator of KaiC phosphorylation in the cyanobacterial circadian clock system.</title>
        <authorList>
            <person name="Kitayama Y."/>
            <person name="Iwasaki H."/>
            <person name="Nishiwaki T."/>
            <person name="Kondo T."/>
        </authorList>
    </citation>
    <scope>FUNCTION</scope>
    <scope>DEVELOPMENTAL STAGE</scope>
</reference>
<reference key="11">
    <citation type="journal article" date="2004" name="Biochem. Biophys. Res. Commun.">
        <title>Stoichiometric interactions between cyanobacterial clock proteins KaiA and KaiC.</title>
        <authorList>
            <person name="Hayashi F."/>
            <person name="Ito H."/>
            <person name="Fujita M."/>
            <person name="Iwase R."/>
            <person name="Uzumaki T."/>
            <person name="Ishiura M."/>
        </authorList>
    </citation>
    <scope>STOICHIOMETRY OF THE COMPLEX FORMED WITH KAIC</scope>
</reference>
<reference key="12">
    <citation type="journal article" date="2004" name="Proc. Natl. Acad. Sci. U.S.A.">
        <title>Role of KaiC phosphorylation in the circadian clock system of Synechococcus elongatus PCC 7942.</title>
        <authorList>
            <person name="Nishiwaki T."/>
            <person name="Satomi Y."/>
            <person name="Nakajima M."/>
            <person name="Lee C."/>
            <person name="Kiyohara R."/>
            <person name="Kageyama H."/>
            <person name="Kitayama Y."/>
            <person name="Temamoto M."/>
            <person name="Yamaguchi A."/>
            <person name="Hijikata A."/>
            <person name="Go M."/>
            <person name="Iwasaki H."/>
            <person name="Takao T."/>
            <person name="Kondo T."/>
        </authorList>
    </citation>
    <scope>FUNCTION</scope>
    <scope>SUBUNIT</scope>
    <source>
        <strain>ATCC 33912 / PCC 7942 / FACHB-805</strain>
    </source>
</reference>
<reference key="13">
    <citation type="journal article" date="2005" name="Science">
        <title>Reconstitution of circadian oscillation of cyanobacterial KaiC phosphorylation in vitro.</title>
        <authorList>
            <person name="Nakajima M."/>
            <person name="Imai K."/>
            <person name="Ito H."/>
            <person name="Nishiwaki T."/>
            <person name="Murayama Y."/>
            <person name="Iwasaki H."/>
            <person name="Oyama T."/>
            <person name="Kondo T."/>
        </authorList>
    </citation>
    <scope>FUNCTION</scope>
    <scope>RECONSTITUTION OF KAIABC OSCILLATOR</scope>
    <source>
        <strain>ATCC 33912 / PCC 7942 / FACHB-805</strain>
    </source>
</reference>
<reference key="14">
    <citation type="journal article" date="2005" name="EMBO J.">
        <title>LdpA: a component of the circadian clock senses redox state of the cell.</title>
        <authorList>
            <person name="Ivleva N.B."/>
            <person name="Bramlett M.R."/>
            <person name="Lindahl P.A."/>
            <person name="Golden S.S."/>
        </authorList>
    </citation>
    <scope>INTERACTION WITH LDPA</scope>
    <scope>SUBUNIT</scope>
    <source>
        <strain>ATCC 33912 / PCC 7942 / FACHB-805</strain>
    </source>
</reference>
<reference key="15">
    <citation type="journal article" date="2006" name="Proc. Natl. Acad. Sci. U.S.A.">
        <title>Quinone sensing by the circadian input kinase of the cyanobacterial circadian clock.</title>
        <authorList>
            <person name="Ivleva N.B."/>
            <person name="Gao T."/>
            <person name="LiWang A.C."/>
            <person name="Golden S.S."/>
        </authorList>
    </citation>
    <scope>COPURIFIES WITH CIKA</scope>
    <source>
        <strain>ATCC 33912 / PCC 7942 / FACHB-805</strain>
    </source>
</reference>
<reference key="16">
    <citation type="journal article" date="2007" name="EMBO J.">
        <title>A sequential program of dual phosphorylation of KaiC as a basis for circadian rhythm in cyanobacteria.</title>
        <authorList>
            <person name="Nishiwaki T."/>
            <person name="Satomi Y."/>
            <person name="Kitayama Y."/>
            <person name="Terauchi K."/>
            <person name="Kiyohara R."/>
            <person name="Takao T."/>
            <person name="Kondo T."/>
        </authorList>
    </citation>
    <scope>FUNCTION</scope>
    <source>
        <strain>ATCC 33912 / PCC 7942 / FACHB-805</strain>
    </source>
</reference>
<reference key="17">
    <citation type="journal article" date="2007" name="Science">
        <title>Ordered phosphorylation governs oscillation of a three-protein circadian clock.</title>
        <authorList>
            <person name="Rust M.J."/>
            <person name="Markson J.S."/>
            <person name="Lane W.S."/>
            <person name="Fisher D.S."/>
            <person name="O'Shea E.K."/>
        </authorList>
    </citation>
    <scope>FUNCTION</scope>
    <source>
        <strain>ATCC 33912 / PCC 7942 / FACHB-805</strain>
    </source>
</reference>
<reference key="18">
    <citation type="journal article" date="2010" name="Proc. Natl. Acad. Sci. U.S.A.">
        <title>The KaiA protein of the cyanobacterial circadian oscillator is modulated by a redox-active cofactor.</title>
        <authorList>
            <person name="Wood T.L."/>
            <person name="Bridwell-Rabb J."/>
            <person name="Kim Y.I."/>
            <person name="Gao T."/>
            <person name="Chang Y.G."/>
            <person name="LiWang A."/>
            <person name="Barondeau D.P."/>
            <person name="Golden S.S."/>
        </authorList>
    </citation>
    <scope>FUNCTION</scope>
    <scope>ACTIVITY REGULATION</scope>
    <scope>INDUCTION</scope>
    <scope>DOMAIN</scope>
    <scope>QUINONE-BINDING</scope>
    <source>
        <strain>ATCC 33912 / PCC 7942 / FACHB-805</strain>
    </source>
</reference>
<reference key="19">
    <citation type="journal article" date="2015" name="Science">
        <title>Circadian rhythms. A protein fold switch joins the circadian oscillator to clock output in cyanobacteria.</title>
        <authorList>
            <person name="Chang Y.G."/>
            <person name="Cohen S.E."/>
            <person name="Phong C."/>
            <person name="Myers W.K."/>
            <person name="Kim Y.I."/>
            <person name="Tseng R."/>
            <person name="Lin J."/>
            <person name="Zhang L."/>
            <person name="Boyd J.S."/>
            <person name="Lee Y."/>
            <person name="Kang S."/>
            <person name="Lee D."/>
            <person name="Li S."/>
            <person name="Britt R.D."/>
            <person name="Rust M.J."/>
            <person name="Golden S.S."/>
            <person name="LiWang A."/>
        </authorList>
    </citation>
    <scope>FUNCTION</scope>
    <scope>SUBUNIT</scope>
    <source>
        <strain>ATCC 33912 / PCC 7942 / FACHB-805</strain>
    </source>
</reference>
<reference key="20">
    <citation type="journal article" date="2017" name="Science">
        <title>Structural basis of the day-night transition in a bacterial circadian clock.</title>
        <authorList>
            <person name="Tseng R."/>
            <person name="Goularte N.F."/>
            <person name="Chavan A."/>
            <person name="Luu J."/>
            <person name="Cohen S.E."/>
            <person name="Chang Y.G."/>
            <person name="Heisler J."/>
            <person name="Li S."/>
            <person name="Michael A.K."/>
            <person name="Tripathi S."/>
            <person name="Golden S.S."/>
            <person name="LiWang A."/>
            <person name="Partch C.L."/>
        </authorList>
    </citation>
    <scope>SUBUNIT</scope>
    <scope>MUTAGENESIS OF LEU-156</scope>
    <source>
        <strain>ATCC 33912 / PCC 7942 / FACHB-805</strain>
    </source>
</reference>
<reference key="21">
    <citation type="journal article" date="2021" name="Science">
        <title>Reconstitution of an intact clock reveals mechanisms of circadian timekeeping.</title>
        <authorList>
            <person name="Chavan A.G."/>
            <person name="Swan J.A."/>
            <person name="Heisler J."/>
            <person name="Sancar C."/>
            <person name="Ernst D.C."/>
            <person name="Fang M."/>
            <person name="Palacios J.G."/>
            <person name="Spangler R.K."/>
            <person name="Bagshaw C.R."/>
            <person name="Tripathi S."/>
            <person name="Crosby P."/>
            <person name="Golden S.S."/>
            <person name="Partch C.L."/>
            <person name="LiWang A."/>
        </authorList>
    </citation>
    <scope>CLOCK RECONSTITUTION</scope>
    <scope>FUNCTION</scope>
    <scope>SUBUNIT</scope>
    <source>
        <strain>ATCC 33912 / PCC 7942 / FACHB-805</strain>
    </source>
</reference>
<reference evidence="30 31" key="22">
    <citation type="journal article" date="2002" name="Proc. Natl. Acad. Sci. U.S.A.">
        <title>Structure and function from the circadian clock protein KaiA of Synechococcus elongatus: a potential clock input mechanism.</title>
        <authorList>
            <person name="Williams S.B."/>
            <person name="Vakonakis I."/>
            <person name="Golden S.S."/>
            <person name="LiWang A.C."/>
        </authorList>
    </citation>
    <scope>STRUCTURE BY NMR OF 1-135</scope>
</reference>
<reference key="23">
    <citation type="journal article" date="2003" name="Proc. Natl. Acad. Sci. U.S.A.">
        <authorList>
            <person name="Williams S.B."/>
            <person name="Vakonakis I."/>
            <person name="Golden S.S."/>
            <person name="LiWang A.C."/>
        </authorList>
    </citation>
    <scope>ERRATUM OF PUBMED:12438647</scope>
</reference>
<reference evidence="32" key="24">
    <citation type="journal article" date="2004" name="J. Biol. Chem.">
        <title>Crystal structure of circadian clock protein KaiA from Synechococcus elongatus.</title>
        <authorList>
            <person name="Ye S."/>
            <person name="Vakonakis I."/>
            <person name="Ioerger T.R."/>
            <person name="LiWang A.C."/>
            <person name="Sacchettini J.C."/>
        </authorList>
    </citation>
    <scope>X-RAY CRYSTALLOGRAPHY (2.03 ANGSTROMS) OF 2-284</scope>
    <scope>HOMODIMERIZATION</scope>
    <scope>DOMAIN</scope>
    <source>
        <strain>ATCC 33912 / PCC 7942 / FACHB-805</strain>
    </source>
</reference>
<reference evidence="33" key="25">
    <citation type="journal article" date="2012" name="Biochemistry">
        <title>Crystal structure of the redox-active cofactor dibromothymoquinone bound to circadian clock protein KaiA and structural basis for dibromothymoquinone's ability to prevent stimulation of KaiC phosphorylation by KaiA.</title>
        <authorList>
            <person name="Pattanayek R."/>
            <person name="Sidiqi S.K."/>
            <person name="Egli M."/>
        </authorList>
    </citation>
    <scope>X-RAY CRYSTALLOGRAPHY (2.39 ANGSTROMS) OF 2-284</scope>
    <scope>HOMODIMERIZATION</scope>
    <scope>QUINONE-BINDING</scope>
</reference>
<reference evidence="34" key="26">
    <citation type="journal article" date="2015" name="Biochemistry">
        <title>Protein-Protein Interactions in the Cyanobacterial Circadian Clock: Structure of KaiA Dimer in Complex with C-Terminal KaiC Peptides at 2.8 A Resolution.</title>
        <authorList>
            <person name="Pattanayek R."/>
            <person name="Egli M."/>
        </authorList>
    </citation>
    <scope>X-RAY CRYSTALLOGRAPHY (2.82 ANGSTROMS) IN COMPLEX WITH KAIC C-TERMINAL PEPTIDE</scope>
    <scope>SUBUNIT</scope>
</reference>
<reference evidence="35" key="27">
    <citation type="journal article" date="2017" name="Science">
        <title>Structures of the cyanobacterial circadian oscillator frozen in a fully assembled state.</title>
        <authorList>
            <person name="Snijder J."/>
            <person name="Schuller J.M."/>
            <person name="Wiegard A."/>
            <person name="Lossl P."/>
            <person name="Schmelling N."/>
            <person name="Axmann I.M."/>
            <person name="Plitzko J.M."/>
            <person name="Forster F."/>
            <person name="Heck A.J."/>
        </authorList>
    </citation>
    <scope>STRUCTURE BY ELECTRON MICROSCOPY (4.70 ANGSTROMS) OF OSCILLATOR COMPLEXES</scope>
    <scope>SUBUNIT</scope>
</reference>
<gene>
    <name evidence="25" type="primary">kaiA</name>
    <name type="ordered locus">Synpcc7942_1218</name>
    <name type="ORF">see0009</name>
</gene>
<organism>
    <name type="scientific">Synechococcus elongatus (strain ATCC 33912 / PCC 7942 / FACHB-805)</name>
    <name type="common">Anacystis nidulans R2</name>
    <dbReference type="NCBI Taxonomy" id="1140"/>
    <lineage>
        <taxon>Bacteria</taxon>
        <taxon>Bacillati</taxon>
        <taxon>Cyanobacteriota</taxon>
        <taxon>Cyanophyceae</taxon>
        <taxon>Synechococcales</taxon>
        <taxon>Synechococcaceae</taxon>
        <taxon>Synechococcus</taxon>
    </lineage>
</organism>
<evidence type="ECO:0000255" key="1">
    <source>
        <dbReference type="PROSITE-ProRule" id="PRU00760"/>
    </source>
</evidence>
<evidence type="ECO:0000255" key="2">
    <source>
        <dbReference type="PROSITE-ProRule" id="PRU00761"/>
    </source>
</evidence>
<evidence type="ECO:0000269" key="3">
    <source>
    </source>
</evidence>
<evidence type="ECO:0000269" key="4">
    <source>
    </source>
</evidence>
<evidence type="ECO:0000269" key="5">
    <source>
    </source>
</evidence>
<evidence type="ECO:0000269" key="6">
    <source>
    </source>
</evidence>
<evidence type="ECO:0000269" key="7">
    <source>
    </source>
</evidence>
<evidence type="ECO:0000269" key="8">
    <source>
    </source>
</evidence>
<evidence type="ECO:0000269" key="9">
    <source>
    </source>
</evidence>
<evidence type="ECO:0000269" key="10">
    <source>
    </source>
</evidence>
<evidence type="ECO:0000269" key="11">
    <source>
    </source>
</evidence>
<evidence type="ECO:0000269" key="12">
    <source>
    </source>
</evidence>
<evidence type="ECO:0000269" key="13">
    <source>
    </source>
</evidence>
<evidence type="ECO:0000269" key="14">
    <source>
    </source>
</evidence>
<evidence type="ECO:0000269" key="15">
    <source>
    </source>
</evidence>
<evidence type="ECO:0000269" key="16">
    <source>
    </source>
</evidence>
<evidence type="ECO:0000269" key="17">
    <source>
    </source>
</evidence>
<evidence type="ECO:0000269" key="18">
    <source>
    </source>
</evidence>
<evidence type="ECO:0000269" key="19">
    <source>
    </source>
</evidence>
<evidence type="ECO:0000269" key="20">
    <source>
    </source>
</evidence>
<evidence type="ECO:0000269" key="21">
    <source>
    </source>
</evidence>
<evidence type="ECO:0000269" key="22">
    <source>
    </source>
</evidence>
<evidence type="ECO:0000269" key="23">
    <source>
    </source>
</evidence>
<evidence type="ECO:0000269" key="24">
    <source>
    </source>
</evidence>
<evidence type="ECO:0000303" key="25">
    <source>
    </source>
</evidence>
<evidence type="ECO:0000305" key="26"/>
<evidence type="ECO:0000312" key="27">
    <source>
        <dbReference type="EMBL" id="AAM82684.1"/>
    </source>
</evidence>
<evidence type="ECO:0000312" key="28">
    <source>
        <dbReference type="EMBL" id="ABB57248.1"/>
    </source>
</evidence>
<evidence type="ECO:0000312" key="29">
    <source>
        <dbReference type="EMBL" id="BAA37101.1"/>
    </source>
</evidence>
<evidence type="ECO:0007744" key="30">
    <source>
        <dbReference type="PDB" id="1M2E"/>
    </source>
</evidence>
<evidence type="ECO:0007744" key="31">
    <source>
        <dbReference type="PDB" id="1M2F"/>
    </source>
</evidence>
<evidence type="ECO:0007744" key="32">
    <source>
        <dbReference type="PDB" id="1R8J"/>
    </source>
</evidence>
<evidence type="ECO:0007744" key="33">
    <source>
        <dbReference type="PDB" id="4G86"/>
    </source>
</evidence>
<evidence type="ECO:0007744" key="34">
    <source>
        <dbReference type="PDB" id="5C5E"/>
    </source>
</evidence>
<evidence type="ECO:0007744" key="35">
    <source>
        <dbReference type="PDB" id="5N8Y"/>
    </source>
</evidence>
<evidence type="ECO:0007829" key="36">
    <source>
        <dbReference type="PDB" id="1M2E"/>
    </source>
</evidence>
<evidence type="ECO:0007829" key="37">
    <source>
        <dbReference type="PDB" id="1R8J"/>
    </source>
</evidence>
<evidence type="ECO:0007829" key="38">
    <source>
        <dbReference type="PDB" id="4G86"/>
    </source>
</evidence>
<evidence type="ECO:0007829" key="39">
    <source>
        <dbReference type="PDB" id="5C5E"/>
    </source>
</evidence>
<keyword id="KW-0002">3D-structure</keyword>
<keyword id="KW-0090">Biological rhythms</keyword>
<keyword id="KW-1185">Reference proteome</keyword>
<dbReference type="EMBL" id="AB010691">
    <property type="protein sequence ID" value="BAA37101.1"/>
    <property type="molecule type" value="Genomic_DNA"/>
</dbReference>
<dbReference type="EMBL" id="AY120853">
    <property type="protein sequence ID" value="AAM82684.1"/>
    <property type="molecule type" value="Genomic_DNA"/>
</dbReference>
<dbReference type="EMBL" id="CP000100">
    <property type="protein sequence ID" value="ABB57248.1"/>
    <property type="molecule type" value="Genomic_DNA"/>
</dbReference>
<dbReference type="PIR" id="T44267">
    <property type="entry name" value="T44267"/>
</dbReference>
<dbReference type="RefSeq" id="WP_011377921.1">
    <property type="nucleotide sequence ID" value="NZ_JACJTX010000003.1"/>
</dbReference>
<dbReference type="PDB" id="1M2E">
    <property type="method" value="NMR"/>
    <property type="chains" value="A=1-135"/>
</dbReference>
<dbReference type="PDB" id="1M2F">
    <property type="method" value="NMR"/>
    <property type="chains" value="A=1-135"/>
</dbReference>
<dbReference type="PDB" id="1R8J">
    <property type="method" value="X-ray"/>
    <property type="resolution" value="2.03 A"/>
    <property type="chains" value="A/B=2-284"/>
</dbReference>
<dbReference type="PDB" id="4G86">
    <property type="method" value="X-ray"/>
    <property type="resolution" value="2.39 A"/>
    <property type="chains" value="A/B=2-284"/>
</dbReference>
<dbReference type="PDB" id="5C5E">
    <property type="method" value="X-ray"/>
    <property type="resolution" value="2.82 A"/>
    <property type="chains" value="A/B=1-284"/>
</dbReference>
<dbReference type="PDB" id="5N8Y">
    <property type="method" value="EM"/>
    <property type="resolution" value="4.70 A"/>
    <property type="chains" value="M/N/O/P/Q/R/S/T/U/V/W/X=1-284"/>
</dbReference>
<dbReference type="PDBsum" id="1M2E"/>
<dbReference type="PDBsum" id="1M2F"/>
<dbReference type="PDBsum" id="1R8J"/>
<dbReference type="PDBsum" id="4G86"/>
<dbReference type="PDBsum" id="5C5E"/>
<dbReference type="PDBsum" id="5N8Y"/>
<dbReference type="BMRB" id="Q79PF6"/>
<dbReference type="EMDB" id="EMD-3602"/>
<dbReference type="SASBDB" id="Q79PF6"/>
<dbReference type="SMR" id="Q79PF6"/>
<dbReference type="DIP" id="DIP-33329N"/>
<dbReference type="IntAct" id="Q79PF6">
    <property type="interactions" value="4"/>
</dbReference>
<dbReference type="STRING" id="1140.Synpcc7942_1218"/>
<dbReference type="PaxDb" id="1140-Synpcc7942_1218"/>
<dbReference type="KEGG" id="syf:Synpcc7942_1218"/>
<dbReference type="eggNOG" id="ENOG502Z8HQ">
    <property type="taxonomic scope" value="Bacteria"/>
</dbReference>
<dbReference type="HOGENOM" id="CLU_911234_0_0_3"/>
<dbReference type="OrthoDB" id="513549at2"/>
<dbReference type="BioCyc" id="SYNEL:SYNPCC7942_1218-MONOMER"/>
<dbReference type="EvolutionaryTrace" id="Q79PF6"/>
<dbReference type="Proteomes" id="UP000889800">
    <property type="component" value="Chromosome"/>
</dbReference>
<dbReference type="GO" id="GO:0042802">
    <property type="term" value="F:identical protein binding"/>
    <property type="evidence" value="ECO:0000353"/>
    <property type="project" value="IntAct"/>
</dbReference>
<dbReference type="GO" id="GO:0007623">
    <property type="term" value="P:circadian rhythm"/>
    <property type="evidence" value="ECO:0007669"/>
    <property type="project" value="InterPro"/>
</dbReference>
<dbReference type="GO" id="GO:0051776">
    <property type="term" value="P:detection of redox state"/>
    <property type="evidence" value="ECO:0000314"/>
    <property type="project" value="UniProtKB"/>
</dbReference>
<dbReference type="GO" id="GO:0009649">
    <property type="term" value="P:entrainment of circadian clock"/>
    <property type="evidence" value="ECO:0000314"/>
    <property type="project" value="UniProtKB"/>
</dbReference>
<dbReference type="GO" id="GO:0042753">
    <property type="term" value="P:positive regulation of circadian rhythm"/>
    <property type="evidence" value="ECO:0000314"/>
    <property type="project" value="UniProtKB"/>
</dbReference>
<dbReference type="FunFam" id="1.10.1240.30:FF:000003">
    <property type="entry name" value="Circadian clock protein KaiA"/>
    <property type="match status" value="1"/>
</dbReference>
<dbReference type="Gene3D" id="3.40.50.2300">
    <property type="match status" value="1"/>
</dbReference>
<dbReference type="Gene3D" id="1.10.1240.30">
    <property type="entry name" value="KaiA/RbsU domain"/>
    <property type="match status" value="1"/>
</dbReference>
<dbReference type="InterPro" id="IPR011006">
    <property type="entry name" value="CheY-like_superfamily"/>
</dbReference>
<dbReference type="InterPro" id="IPR011648">
    <property type="entry name" value="Circadian_clock_KaiA"/>
</dbReference>
<dbReference type="InterPro" id="IPR020844">
    <property type="entry name" value="Circadian_clock_KaiA_N"/>
</dbReference>
<dbReference type="InterPro" id="IPR020856">
    <property type="entry name" value="Circadian_clock_protein_KaiA_C"/>
</dbReference>
<dbReference type="InterPro" id="IPR017944">
    <property type="entry name" value="KaiA/RbsU_helical_domain_sf"/>
</dbReference>
<dbReference type="Pfam" id="PF07688">
    <property type="entry name" value="KaiA"/>
    <property type="match status" value="1"/>
</dbReference>
<dbReference type="Pfam" id="PF21714">
    <property type="entry name" value="KaiA_N"/>
    <property type="match status" value="1"/>
</dbReference>
<dbReference type="SMART" id="SM01247">
    <property type="entry name" value="KaiA"/>
    <property type="match status" value="1"/>
</dbReference>
<dbReference type="SUPFAM" id="SSF52172">
    <property type="entry name" value="CheY-like"/>
    <property type="match status" value="1"/>
</dbReference>
<dbReference type="SUPFAM" id="SSF101215">
    <property type="entry name" value="KaiA/RbsU domain"/>
    <property type="match status" value="1"/>
</dbReference>
<dbReference type="PROSITE" id="PS51431">
    <property type="entry name" value="KAIA_C"/>
    <property type="match status" value="1"/>
</dbReference>
<dbReference type="PROSITE" id="PS51430">
    <property type="entry name" value="KAIA_N"/>
    <property type="match status" value="1"/>
</dbReference>
<sequence>MLSQIAICIWVESTAILQDCQRALSADRYQLQVCESGEMLLEYAQTHRDQIDCLILVAANPSFRAVVQQLCFEGVVVPAIVVGDRDSEDPDEPAKEQLYHSAELHLGIHQLEQLPYQVDAALAEFLRLAPVETMADHIMLMGANHDPELSSQQRDLAQRLQERLGYLGVYYKRDPDRFLRNLPAYESQKLHQAMQTSYREIVLSYFSPNSNLNQSIDNFVNMAFFADVPVTKVVEIHMELMDEFAKKLRVEGRSEDILLDYRLTLIDVIAHLCEMYRRSIPRET</sequence>
<protein>
    <recommendedName>
        <fullName evidence="25">Circadian clock oscillator protein KaiA</fullName>
    </recommendedName>
</protein>
<name>KAIA_SYNE7</name>